<feature type="chain" id="PRO_1000205937" description="3-hydroxydecanoyl-[acyl-carrier-protein] dehydratase">
    <location>
        <begin position="1"/>
        <end position="174"/>
    </location>
</feature>
<feature type="active site" evidence="1">
    <location>
        <position position="73"/>
    </location>
</feature>
<comment type="function">
    <text evidence="1">Necessary for the introduction of cis unsaturation into fatty acids. Catalyzes the dehydration of (3R)-3-hydroxydecanoyl-ACP to E-(2)-decenoyl-ACP and then its isomerization to Z-(3)-decenoyl-ACP. Can catalyze the dehydratase reaction for beta-hydroxyacyl-ACPs with saturated chain lengths up to 16:0, being most active on intermediate chain length.</text>
</comment>
<comment type="catalytic activity">
    <reaction evidence="1">
        <text>a (3R)-hydroxyacyl-[ACP] = a (2E)-enoyl-[ACP] + H2O</text>
        <dbReference type="Rhea" id="RHEA:13097"/>
        <dbReference type="Rhea" id="RHEA-COMP:9925"/>
        <dbReference type="Rhea" id="RHEA-COMP:9945"/>
        <dbReference type="ChEBI" id="CHEBI:15377"/>
        <dbReference type="ChEBI" id="CHEBI:78784"/>
        <dbReference type="ChEBI" id="CHEBI:78827"/>
        <dbReference type="EC" id="4.2.1.59"/>
    </reaction>
</comment>
<comment type="catalytic activity">
    <reaction evidence="1">
        <text>(3R)-hydroxydecanoyl-[ACP] = (2E)-decenoyl-[ACP] + H2O</text>
        <dbReference type="Rhea" id="RHEA:41860"/>
        <dbReference type="Rhea" id="RHEA-COMP:9638"/>
        <dbReference type="Rhea" id="RHEA-COMP:9639"/>
        <dbReference type="ChEBI" id="CHEBI:15377"/>
        <dbReference type="ChEBI" id="CHEBI:78466"/>
        <dbReference type="ChEBI" id="CHEBI:78467"/>
    </reaction>
</comment>
<comment type="catalytic activity">
    <reaction evidence="1">
        <text>(2E)-decenoyl-[ACP] = (3Z)-decenoyl-[ACP]</text>
        <dbReference type="Rhea" id="RHEA:23568"/>
        <dbReference type="Rhea" id="RHEA-COMP:9639"/>
        <dbReference type="Rhea" id="RHEA-COMP:9927"/>
        <dbReference type="ChEBI" id="CHEBI:78467"/>
        <dbReference type="ChEBI" id="CHEBI:78798"/>
        <dbReference type="EC" id="5.3.3.14"/>
    </reaction>
</comment>
<comment type="pathway">
    <text evidence="1">Lipid metabolism; fatty acid biosynthesis.</text>
</comment>
<comment type="subunit">
    <text evidence="1">Homodimer.</text>
</comment>
<comment type="subcellular location">
    <subcellularLocation>
        <location evidence="1">Cytoplasm</location>
    </subcellularLocation>
</comment>
<comment type="similarity">
    <text evidence="1">Belongs to the thioester dehydratase family. FabA subfamily.</text>
</comment>
<gene>
    <name evidence="1" type="primary">fabA</name>
    <name type="ordered locus">TERTU_0948</name>
</gene>
<reference key="1">
    <citation type="journal article" date="2009" name="PLoS ONE">
        <title>The complete genome of Teredinibacter turnerae T7901: an intracellular endosymbiont of marine wood-boring bivalves (shipworms).</title>
        <authorList>
            <person name="Yang J.C."/>
            <person name="Madupu R."/>
            <person name="Durkin A.S."/>
            <person name="Ekborg N.A."/>
            <person name="Pedamallu C.S."/>
            <person name="Hostetler J.B."/>
            <person name="Radune D."/>
            <person name="Toms B.S."/>
            <person name="Henrissat B."/>
            <person name="Coutinho P.M."/>
            <person name="Schwarz S."/>
            <person name="Field L."/>
            <person name="Trindade-Silva A.E."/>
            <person name="Soares C.A.G."/>
            <person name="Elshahawi S."/>
            <person name="Hanora A."/>
            <person name="Schmidt E.W."/>
            <person name="Haygood M.G."/>
            <person name="Posfai J."/>
            <person name="Benner J."/>
            <person name="Madinger C."/>
            <person name="Nove J."/>
            <person name="Anton B."/>
            <person name="Chaudhary K."/>
            <person name="Foster J."/>
            <person name="Holman A."/>
            <person name="Kumar S."/>
            <person name="Lessard P.A."/>
            <person name="Luyten Y.A."/>
            <person name="Slatko B."/>
            <person name="Wood N."/>
            <person name="Wu B."/>
            <person name="Teplitski M."/>
            <person name="Mougous J.D."/>
            <person name="Ward N."/>
            <person name="Eisen J.A."/>
            <person name="Badger J.H."/>
            <person name="Distel D.L."/>
        </authorList>
    </citation>
    <scope>NUCLEOTIDE SEQUENCE [LARGE SCALE GENOMIC DNA]</scope>
    <source>
        <strain>ATCC 39867 / T7901</strain>
    </source>
</reference>
<proteinExistence type="inferred from homology"/>
<sequence>MQDFVPNSSYTREELIACGNGELFGPGNAQLPVPNMLMLDRIAHISTTGGEYGKGEIIAELDIHKDLWFFGCHFPGDPVMPGCLGLDAMWQLVGFFLAWKGNPGRGRALGSGEVKFTGQILPTAKQVTYHIHLKRVIERKLIMGIADGRVAVDGKEIYFAKDLRVGLFSNTDTF</sequence>
<evidence type="ECO:0000255" key="1">
    <source>
        <dbReference type="HAMAP-Rule" id="MF_00405"/>
    </source>
</evidence>
<name>FABA_TERTT</name>
<dbReference type="EC" id="4.2.1.59" evidence="1"/>
<dbReference type="EC" id="5.3.3.14" evidence="1"/>
<dbReference type="EMBL" id="CP001614">
    <property type="protein sequence ID" value="ACR14266.1"/>
    <property type="molecule type" value="Genomic_DNA"/>
</dbReference>
<dbReference type="RefSeq" id="WP_015820382.1">
    <property type="nucleotide sequence ID" value="NC_012997.1"/>
</dbReference>
<dbReference type="SMR" id="C5BQA1"/>
<dbReference type="STRING" id="377629.TERTU_0948"/>
<dbReference type="GeneID" id="58408721"/>
<dbReference type="GeneID" id="93857703"/>
<dbReference type="KEGG" id="ttu:TERTU_0948"/>
<dbReference type="eggNOG" id="COG0764">
    <property type="taxonomic scope" value="Bacteria"/>
</dbReference>
<dbReference type="HOGENOM" id="CLU_097925_0_0_6"/>
<dbReference type="OrthoDB" id="9786735at2"/>
<dbReference type="UniPathway" id="UPA00094"/>
<dbReference type="Proteomes" id="UP000009080">
    <property type="component" value="Chromosome"/>
</dbReference>
<dbReference type="GO" id="GO:0005737">
    <property type="term" value="C:cytoplasm"/>
    <property type="evidence" value="ECO:0007669"/>
    <property type="project" value="UniProtKB-SubCell"/>
</dbReference>
<dbReference type="GO" id="GO:0019171">
    <property type="term" value="F:(3R)-hydroxyacyl-[acyl-carrier-protein] dehydratase activity"/>
    <property type="evidence" value="ECO:0007669"/>
    <property type="project" value="UniProtKB-UniRule"/>
</dbReference>
<dbReference type="GO" id="GO:0034017">
    <property type="term" value="F:trans-2-decenoyl-acyl-carrier-protein isomerase activity"/>
    <property type="evidence" value="ECO:0007669"/>
    <property type="project" value="UniProtKB-UniRule"/>
</dbReference>
<dbReference type="GO" id="GO:0006636">
    <property type="term" value="P:unsaturated fatty acid biosynthetic process"/>
    <property type="evidence" value="ECO:0007669"/>
    <property type="project" value="UniProtKB-UniRule"/>
</dbReference>
<dbReference type="CDD" id="cd01287">
    <property type="entry name" value="FabA"/>
    <property type="match status" value="1"/>
</dbReference>
<dbReference type="Gene3D" id="3.10.129.10">
    <property type="entry name" value="Hotdog Thioesterase"/>
    <property type="match status" value="1"/>
</dbReference>
<dbReference type="HAMAP" id="MF_00405">
    <property type="entry name" value="FabA"/>
    <property type="match status" value="1"/>
</dbReference>
<dbReference type="InterPro" id="IPR010083">
    <property type="entry name" value="FabA"/>
</dbReference>
<dbReference type="InterPro" id="IPR013114">
    <property type="entry name" value="FabA_FabZ"/>
</dbReference>
<dbReference type="InterPro" id="IPR029069">
    <property type="entry name" value="HotDog_dom_sf"/>
</dbReference>
<dbReference type="NCBIfam" id="TIGR01749">
    <property type="entry name" value="fabA"/>
    <property type="match status" value="1"/>
</dbReference>
<dbReference type="NCBIfam" id="NF003509">
    <property type="entry name" value="PRK05174.1"/>
    <property type="match status" value="1"/>
</dbReference>
<dbReference type="PANTHER" id="PTHR30272">
    <property type="entry name" value="3-HYDROXYACYL-[ACYL-CARRIER-PROTEIN] DEHYDRATASE"/>
    <property type="match status" value="1"/>
</dbReference>
<dbReference type="PANTHER" id="PTHR30272:SF8">
    <property type="entry name" value="3-HYDROXYDECANOYL-[ACYL-CARRIER-PROTEIN] DEHYDRATASE"/>
    <property type="match status" value="1"/>
</dbReference>
<dbReference type="Pfam" id="PF07977">
    <property type="entry name" value="FabA"/>
    <property type="match status" value="1"/>
</dbReference>
<dbReference type="SUPFAM" id="SSF54637">
    <property type="entry name" value="Thioesterase/thiol ester dehydrase-isomerase"/>
    <property type="match status" value="1"/>
</dbReference>
<keyword id="KW-0963">Cytoplasm</keyword>
<keyword id="KW-0275">Fatty acid biosynthesis</keyword>
<keyword id="KW-0276">Fatty acid metabolism</keyword>
<keyword id="KW-0413">Isomerase</keyword>
<keyword id="KW-0444">Lipid biosynthesis</keyword>
<keyword id="KW-0443">Lipid metabolism</keyword>
<keyword id="KW-0456">Lyase</keyword>
<keyword id="KW-1185">Reference proteome</keyword>
<protein>
    <recommendedName>
        <fullName evidence="1">3-hydroxydecanoyl-[acyl-carrier-protein] dehydratase</fullName>
        <ecNumber evidence="1">4.2.1.59</ecNumber>
    </recommendedName>
    <alternativeName>
        <fullName evidence="1">3-hydroxyacyl-[acyl-carrier-protein] dehydratase FabA</fullName>
    </alternativeName>
    <alternativeName>
        <fullName evidence="1">Beta-hydroxydecanoyl thioester dehydrase</fullName>
    </alternativeName>
    <alternativeName>
        <fullName evidence="1">Trans-2-decenoyl-[acyl-carrier-protein] isomerase</fullName>
        <ecNumber evidence="1">5.3.3.14</ecNumber>
    </alternativeName>
</protein>
<accession>C5BQA1</accession>
<organism>
    <name type="scientific">Teredinibacter turnerae (strain ATCC 39867 / T7901)</name>
    <dbReference type="NCBI Taxonomy" id="377629"/>
    <lineage>
        <taxon>Bacteria</taxon>
        <taxon>Pseudomonadati</taxon>
        <taxon>Pseudomonadota</taxon>
        <taxon>Gammaproteobacteria</taxon>
        <taxon>Cellvibrionales</taxon>
        <taxon>Cellvibrionaceae</taxon>
        <taxon>Teredinibacter</taxon>
    </lineage>
</organism>